<organism>
    <name type="scientific">Aeromonas hydrophila subsp. hydrophila (strain ATCC 7966 / DSM 30187 / BCRC 13018 / CCUG 14551 / JCM 1027 / KCTC 2358 / NCIMB 9240 / NCTC 8049)</name>
    <dbReference type="NCBI Taxonomy" id="380703"/>
    <lineage>
        <taxon>Bacteria</taxon>
        <taxon>Pseudomonadati</taxon>
        <taxon>Pseudomonadota</taxon>
        <taxon>Gammaproteobacteria</taxon>
        <taxon>Aeromonadales</taxon>
        <taxon>Aeromonadaceae</taxon>
        <taxon>Aeromonas</taxon>
    </lineage>
</organism>
<keyword id="KW-0028">Amino-acid biosynthesis</keyword>
<keyword id="KW-0032">Aminotransferase</keyword>
<keyword id="KW-0368">Histidine biosynthesis</keyword>
<keyword id="KW-0663">Pyridoxal phosphate</keyword>
<keyword id="KW-1185">Reference proteome</keyword>
<keyword id="KW-0808">Transferase</keyword>
<dbReference type="EC" id="2.6.1.9" evidence="1"/>
<dbReference type="EMBL" id="CP000462">
    <property type="protein sequence ID" value="ABK39360.1"/>
    <property type="molecule type" value="Genomic_DNA"/>
</dbReference>
<dbReference type="RefSeq" id="WP_011706051.1">
    <property type="nucleotide sequence ID" value="NC_008570.1"/>
</dbReference>
<dbReference type="RefSeq" id="YP_856718.1">
    <property type="nucleotide sequence ID" value="NC_008570.1"/>
</dbReference>
<dbReference type="SMR" id="A0KKB7"/>
<dbReference type="STRING" id="380703.AHA_2194"/>
<dbReference type="EnsemblBacteria" id="ABK39360">
    <property type="protein sequence ID" value="ABK39360"/>
    <property type="gene ID" value="AHA_2194"/>
</dbReference>
<dbReference type="GeneID" id="4489953"/>
<dbReference type="KEGG" id="aha:AHA_2194"/>
<dbReference type="PATRIC" id="fig|380703.7.peg.2197"/>
<dbReference type="eggNOG" id="COG0079">
    <property type="taxonomic scope" value="Bacteria"/>
</dbReference>
<dbReference type="HOGENOM" id="CLU_017584_3_1_6"/>
<dbReference type="OrthoDB" id="9813612at2"/>
<dbReference type="UniPathway" id="UPA00031">
    <property type="reaction ID" value="UER00012"/>
</dbReference>
<dbReference type="Proteomes" id="UP000000756">
    <property type="component" value="Chromosome"/>
</dbReference>
<dbReference type="GO" id="GO:0004400">
    <property type="term" value="F:histidinol-phosphate transaminase activity"/>
    <property type="evidence" value="ECO:0007669"/>
    <property type="project" value="UniProtKB-UniRule"/>
</dbReference>
<dbReference type="GO" id="GO:0030170">
    <property type="term" value="F:pyridoxal phosphate binding"/>
    <property type="evidence" value="ECO:0007669"/>
    <property type="project" value="InterPro"/>
</dbReference>
<dbReference type="GO" id="GO:0000105">
    <property type="term" value="P:L-histidine biosynthetic process"/>
    <property type="evidence" value="ECO:0007669"/>
    <property type="project" value="UniProtKB-UniRule"/>
</dbReference>
<dbReference type="CDD" id="cd00609">
    <property type="entry name" value="AAT_like"/>
    <property type="match status" value="1"/>
</dbReference>
<dbReference type="Gene3D" id="3.90.1150.10">
    <property type="entry name" value="Aspartate Aminotransferase, domain 1"/>
    <property type="match status" value="1"/>
</dbReference>
<dbReference type="Gene3D" id="3.40.640.10">
    <property type="entry name" value="Type I PLP-dependent aspartate aminotransferase-like (Major domain)"/>
    <property type="match status" value="1"/>
</dbReference>
<dbReference type="HAMAP" id="MF_01023">
    <property type="entry name" value="HisC_aminotrans_2"/>
    <property type="match status" value="1"/>
</dbReference>
<dbReference type="InterPro" id="IPR001917">
    <property type="entry name" value="Aminotrans_II_pyridoxalP_BS"/>
</dbReference>
<dbReference type="InterPro" id="IPR004839">
    <property type="entry name" value="Aminotransferase_I/II_large"/>
</dbReference>
<dbReference type="InterPro" id="IPR005861">
    <property type="entry name" value="HisP_aminotrans"/>
</dbReference>
<dbReference type="InterPro" id="IPR015424">
    <property type="entry name" value="PyrdxlP-dep_Trfase"/>
</dbReference>
<dbReference type="InterPro" id="IPR015421">
    <property type="entry name" value="PyrdxlP-dep_Trfase_major"/>
</dbReference>
<dbReference type="InterPro" id="IPR015422">
    <property type="entry name" value="PyrdxlP-dep_Trfase_small"/>
</dbReference>
<dbReference type="NCBIfam" id="TIGR01141">
    <property type="entry name" value="hisC"/>
    <property type="match status" value="1"/>
</dbReference>
<dbReference type="PANTHER" id="PTHR42885:SF2">
    <property type="entry name" value="HISTIDINOL-PHOSPHATE AMINOTRANSFERASE"/>
    <property type="match status" value="1"/>
</dbReference>
<dbReference type="PANTHER" id="PTHR42885">
    <property type="entry name" value="HISTIDINOL-PHOSPHATE AMINOTRANSFERASE-RELATED"/>
    <property type="match status" value="1"/>
</dbReference>
<dbReference type="Pfam" id="PF00155">
    <property type="entry name" value="Aminotran_1_2"/>
    <property type="match status" value="1"/>
</dbReference>
<dbReference type="SUPFAM" id="SSF53383">
    <property type="entry name" value="PLP-dependent transferases"/>
    <property type="match status" value="1"/>
</dbReference>
<dbReference type="PROSITE" id="PS00599">
    <property type="entry name" value="AA_TRANSFER_CLASS_2"/>
    <property type="match status" value="1"/>
</dbReference>
<gene>
    <name evidence="1" type="primary">hisC</name>
    <name type="ordered locus">AHA_2194</name>
</gene>
<reference key="1">
    <citation type="journal article" date="2006" name="J. Bacteriol.">
        <title>Genome sequence of Aeromonas hydrophila ATCC 7966T: jack of all trades.</title>
        <authorList>
            <person name="Seshadri R."/>
            <person name="Joseph S.W."/>
            <person name="Chopra A.K."/>
            <person name="Sha J."/>
            <person name="Shaw J."/>
            <person name="Graf J."/>
            <person name="Haft D.H."/>
            <person name="Wu M."/>
            <person name="Ren Q."/>
            <person name="Rosovitz M.J."/>
            <person name="Madupu R."/>
            <person name="Tallon L."/>
            <person name="Kim M."/>
            <person name="Jin S."/>
            <person name="Vuong H."/>
            <person name="Stine O.C."/>
            <person name="Ali A."/>
            <person name="Horneman A.J."/>
            <person name="Heidelberg J.F."/>
        </authorList>
    </citation>
    <scope>NUCLEOTIDE SEQUENCE [LARGE SCALE GENOMIC DNA]</scope>
    <source>
        <strain>ATCC 7966 / DSM 30187 / BCRC 13018 / CCUG 14551 / JCM 1027 / KCTC 2358 / NCIMB 9240 / NCTC 8049</strain>
    </source>
</reference>
<feature type="chain" id="PRO_1000063456" description="Histidinol-phosphate aminotransferase">
    <location>
        <begin position="1"/>
        <end position="356"/>
    </location>
</feature>
<feature type="modified residue" description="N6-(pyridoxal phosphate)lysine" evidence="1">
    <location>
        <position position="211"/>
    </location>
</feature>
<name>HIS8_AERHH</name>
<accession>A0KKB7</accession>
<protein>
    <recommendedName>
        <fullName evidence="1">Histidinol-phosphate aminotransferase</fullName>
        <ecNumber evidence="1">2.6.1.9</ecNumber>
    </recommendedName>
    <alternativeName>
        <fullName evidence="1">Imidazole acetol-phosphate transaminase</fullName>
    </alternativeName>
</protein>
<sequence length="356" mass="38432">MSIANLARRVVRALTPYQSARRIGGKGHVWLNANEAPLAYPFTIEGGRLNRYPECQPAEVVNGYAAYAGVNPDQVLVSRGADEAIELLIRTFCEAGEDQILICPPTYGMYAISAETCGVGIVEQPLTTSRQPDWPAIADRLSDVKLVFLCSPNNPTGDLVGRDGLIALLEKARDRAIVVVDEAYIEFCPEASVVDLLARFPNLVVTRTLSKAFALAGIRCGFTLASPEVIAMLAKVIAPYPIPEPIAQIAAQALSPMGLELMQERVVELNKQKAAFKAALATLHCVKEVFEDKGNFVLVRFVDGAAVFAAMKAAGIILRDFSTKPGLDNSIRVTIGYQGEMDAVLAVLRDLPSPSF</sequence>
<proteinExistence type="inferred from homology"/>
<evidence type="ECO:0000255" key="1">
    <source>
        <dbReference type="HAMAP-Rule" id="MF_01023"/>
    </source>
</evidence>
<comment type="catalytic activity">
    <reaction evidence="1">
        <text>L-histidinol phosphate + 2-oxoglutarate = 3-(imidazol-4-yl)-2-oxopropyl phosphate + L-glutamate</text>
        <dbReference type="Rhea" id="RHEA:23744"/>
        <dbReference type="ChEBI" id="CHEBI:16810"/>
        <dbReference type="ChEBI" id="CHEBI:29985"/>
        <dbReference type="ChEBI" id="CHEBI:57766"/>
        <dbReference type="ChEBI" id="CHEBI:57980"/>
        <dbReference type="EC" id="2.6.1.9"/>
    </reaction>
</comment>
<comment type="cofactor">
    <cofactor evidence="1">
        <name>pyridoxal 5'-phosphate</name>
        <dbReference type="ChEBI" id="CHEBI:597326"/>
    </cofactor>
</comment>
<comment type="pathway">
    <text evidence="1">Amino-acid biosynthesis; L-histidine biosynthesis; L-histidine from 5-phospho-alpha-D-ribose 1-diphosphate: step 7/9.</text>
</comment>
<comment type="subunit">
    <text evidence="1">Homodimer.</text>
</comment>
<comment type="similarity">
    <text evidence="1">Belongs to the class-II pyridoxal-phosphate-dependent aminotransferase family. Histidinol-phosphate aminotransferase subfamily.</text>
</comment>